<organism>
    <name type="scientific">Cupriavidus pinatubonensis (strain JMP 134 / LMG 1197)</name>
    <name type="common">Cupriavidus necator (strain JMP 134)</name>
    <dbReference type="NCBI Taxonomy" id="264198"/>
    <lineage>
        <taxon>Bacteria</taxon>
        <taxon>Pseudomonadati</taxon>
        <taxon>Pseudomonadota</taxon>
        <taxon>Betaproteobacteria</taxon>
        <taxon>Burkholderiales</taxon>
        <taxon>Burkholderiaceae</taxon>
        <taxon>Cupriavidus</taxon>
    </lineage>
</organism>
<gene>
    <name evidence="1" type="primary">ssuD</name>
    <name type="ordered locus">Reut_A1976</name>
</gene>
<feature type="chain" id="PRO_1000066833" description="Alkanesulfonate monooxygenase">
    <location>
        <begin position="1"/>
        <end position="387"/>
    </location>
</feature>
<protein>
    <recommendedName>
        <fullName evidence="1">Alkanesulfonate monooxygenase</fullName>
        <ecNumber evidence="1">1.14.14.5</ecNumber>
    </recommendedName>
    <alternativeName>
        <fullName evidence="1">FMNH2-dependent aliphatic sulfonate monooxygenase</fullName>
    </alternativeName>
</protein>
<keyword id="KW-0285">Flavoprotein</keyword>
<keyword id="KW-0288">FMN</keyword>
<keyword id="KW-0503">Monooxygenase</keyword>
<keyword id="KW-0560">Oxidoreductase</keyword>
<dbReference type="EC" id="1.14.14.5" evidence="1"/>
<dbReference type="EMBL" id="CP000090">
    <property type="protein sequence ID" value="AAZ61340.1"/>
    <property type="molecule type" value="Genomic_DNA"/>
</dbReference>
<dbReference type="SMR" id="Q46ZU3"/>
<dbReference type="STRING" id="264198.Reut_A1976"/>
<dbReference type="KEGG" id="reu:Reut_A1976"/>
<dbReference type="eggNOG" id="COG2141">
    <property type="taxonomic scope" value="Bacteria"/>
</dbReference>
<dbReference type="HOGENOM" id="CLU_027853_1_0_4"/>
<dbReference type="OrthoDB" id="9814695at2"/>
<dbReference type="GO" id="GO:0008726">
    <property type="term" value="F:alkanesulfonate monooxygenase activity"/>
    <property type="evidence" value="ECO:0007669"/>
    <property type="project" value="UniProtKB-UniRule"/>
</dbReference>
<dbReference type="GO" id="GO:0046306">
    <property type="term" value="P:alkanesulfonate catabolic process"/>
    <property type="evidence" value="ECO:0007669"/>
    <property type="project" value="TreeGrafter"/>
</dbReference>
<dbReference type="CDD" id="cd01094">
    <property type="entry name" value="Alkanesulfonate_monoxygenase"/>
    <property type="match status" value="1"/>
</dbReference>
<dbReference type="Gene3D" id="3.20.20.30">
    <property type="entry name" value="Luciferase-like domain"/>
    <property type="match status" value="1"/>
</dbReference>
<dbReference type="HAMAP" id="MF_01229">
    <property type="entry name" value="Alkanesulf_monooxygen"/>
    <property type="match status" value="1"/>
</dbReference>
<dbReference type="InterPro" id="IPR019911">
    <property type="entry name" value="Alkanesulphonate_mOase_FMN-dep"/>
</dbReference>
<dbReference type="InterPro" id="IPR011251">
    <property type="entry name" value="Luciferase-like_dom"/>
</dbReference>
<dbReference type="InterPro" id="IPR036661">
    <property type="entry name" value="Luciferase-like_sf"/>
</dbReference>
<dbReference type="InterPro" id="IPR050172">
    <property type="entry name" value="SsuD_RutA_monooxygenase"/>
</dbReference>
<dbReference type="NCBIfam" id="TIGR03565">
    <property type="entry name" value="alk_sulf_monoox"/>
    <property type="match status" value="1"/>
</dbReference>
<dbReference type="NCBIfam" id="NF001939">
    <property type="entry name" value="PRK00719.1"/>
    <property type="match status" value="1"/>
</dbReference>
<dbReference type="PANTHER" id="PTHR42847">
    <property type="entry name" value="ALKANESULFONATE MONOOXYGENASE"/>
    <property type="match status" value="1"/>
</dbReference>
<dbReference type="PANTHER" id="PTHR42847:SF4">
    <property type="entry name" value="ALKANESULFONATE MONOOXYGENASE-RELATED"/>
    <property type="match status" value="1"/>
</dbReference>
<dbReference type="Pfam" id="PF00296">
    <property type="entry name" value="Bac_luciferase"/>
    <property type="match status" value="1"/>
</dbReference>
<dbReference type="SUPFAM" id="SSF51679">
    <property type="entry name" value="Bacterial luciferase-like"/>
    <property type="match status" value="1"/>
</dbReference>
<reference key="1">
    <citation type="journal article" date="2010" name="PLoS ONE">
        <title>The complete multipartite genome sequence of Cupriavidus necator JMP134, a versatile pollutant degrader.</title>
        <authorList>
            <person name="Lykidis A."/>
            <person name="Perez-Pantoja D."/>
            <person name="Ledger T."/>
            <person name="Mavromatis K."/>
            <person name="Anderson I.J."/>
            <person name="Ivanova N.N."/>
            <person name="Hooper S.D."/>
            <person name="Lapidus A."/>
            <person name="Lucas S."/>
            <person name="Gonzalez B."/>
            <person name="Kyrpides N.C."/>
        </authorList>
    </citation>
    <scope>NUCLEOTIDE SEQUENCE [LARGE SCALE GENOMIC DNA]</scope>
    <source>
        <strain>JMP134 / LMG 1197</strain>
    </source>
</reference>
<name>SSUD_CUPPJ</name>
<comment type="function">
    <text evidence="1">Catalyzes the desulfonation of aliphatic sulfonates.</text>
</comment>
<comment type="catalytic activity">
    <reaction evidence="1">
        <text>an alkanesulfonate + FMNH2 + O2 = an aldehyde + FMN + sulfite + H2O + 2 H(+)</text>
        <dbReference type="Rhea" id="RHEA:23064"/>
        <dbReference type="ChEBI" id="CHEBI:15377"/>
        <dbReference type="ChEBI" id="CHEBI:15378"/>
        <dbReference type="ChEBI" id="CHEBI:15379"/>
        <dbReference type="ChEBI" id="CHEBI:17359"/>
        <dbReference type="ChEBI" id="CHEBI:17478"/>
        <dbReference type="ChEBI" id="CHEBI:57618"/>
        <dbReference type="ChEBI" id="CHEBI:58210"/>
        <dbReference type="ChEBI" id="CHEBI:134249"/>
        <dbReference type="EC" id="1.14.14.5"/>
    </reaction>
</comment>
<comment type="similarity">
    <text evidence="1">Belongs to the SsuD family.</text>
</comment>
<sequence>MQVFWFIPTHGDSRYLGTSEGAREVGIDYLKQVAVAADTLGYEGVLIPTGRSCEDPWVVASALAAVTQKLRFLVAVRPGLMTPTLAARMAATFDRISGGRLLVNLVTGGDVAELEGDGLFLDHAARYEASSEFIRIWRDVLAASHDSGEISFKGRHLRVKGARVLYPPLQRPHPPVYFGGSSAAAHELAGEQVDTYLTWGEPPADVALKLADVRKHAERHGRTVKFGIRLHVIVRETEAAAWAAADDLISRLDDETVARAQAVFAKMDSEGQRRMAALHAGGSKRTREALEISPNLWAGVGLVRGGAGTALVGDPHQVAARIREYSELGIDTFVLSGYPHLEEAYRFAELVFPLLPLAVRNKLPGQVLSGPFGEVMATGIVPRASQS</sequence>
<accession>Q46ZU3</accession>
<evidence type="ECO:0000255" key="1">
    <source>
        <dbReference type="HAMAP-Rule" id="MF_01229"/>
    </source>
</evidence>
<proteinExistence type="inferred from homology"/>